<organism>
    <name type="scientific">Homo sapiens</name>
    <name type="common">Human</name>
    <dbReference type="NCBI Taxonomy" id="9606"/>
    <lineage>
        <taxon>Eukaryota</taxon>
        <taxon>Metazoa</taxon>
        <taxon>Chordata</taxon>
        <taxon>Craniata</taxon>
        <taxon>Vertebrata</taxon>
        <taxon>Euteleostomi</taxon>
        <taxon>Mammalia</taxon>
        <taxon>Eutheria</taxon>
        <taxon>Euarchontoglires</taxon>
        <taxon>Primates</taxon>
        <taxon>Haplorrhini</taxon>
        <taxon>Catarrhini</taxon>
        <taxon>Hominidae</taxon>
        <taxon>Homo</taxon>
    </lineage>
</organism>
<evidence type="ECO:0000250" key="1">
    <source>
        <dbReference type="UniProtKB" id="P70211"/>
    </source>
</evidence>
<evidence type="ECO:0000250" key="2">
    <source>
        <dbReference type="UniProtKB" id="Q63155"/>
    </source>
</evidence>
<evidence type="ECO:0000255" key="3"/>
<evidence type="ECO:0000255" key="4">
    <source>
        <dbReference type="PROSITE-ProRule" id="PRU00114"/>
    </source>
</evidence>
<evidence type="ECO:0000255" key="5">
    <source>
        <dbReference type="PROSITE-ProRule" id="PRU00316"/>
    </source>
</evidence>
<evidence type="ECO:0000256" key="6">
    <source>
        <dbReference type="SAM" id="MobiDB-lite"/>
    </source>
</evidence>
<evidence type="ECO:0000269" key="7">
    <source>
    </source>
</evidence>
<evidence type="ECO:0000269" key="8">
    <source>
    </source>
</evidence>
<evidence type="ECO:0000269" key="9">
    <source>
    </source>
</evidence>
<evidence type="ECO:0000269" key="10">
    <source>
    </source>
</evidence>
<evidence type="ECO:0000269" key="11">
    <source>
    </source>
</evidence>
<evidence type="ECO:0000269" key="12">
    <source>
    </source>
</evidence>
<evidence type="ECO:0000269" key="13">
    <source>
    </source>
</evidence>
<evidence type="ECO:0000269" key="14">
    <source>
    </source>
</evidence>
<evidence type="ECO:0000269" key="15">
    <source>
    </source>
</evidence>
<evidence type="ECO:0000269" key="16">
    <source>
    </source>
</evidence>
<evidence type="ECO:0000269" key="17">
    <source>
    </source>
</evidence>
<evidence type="ECO:0000269" key="18">
    <source>
    </source>
</evidence>
<evidence type="ECO:0000305" key="19"/>
<evidence type="ECO:0007829" key="20">
    <source>
        <dbReference type="PDB" id="2ED7"/>
    </source>
</evidence>
<evidence type="ECO:0007829" key="21">
    <source>
        <dbReference type="PDB" id="2ED8"/>
    </source>
</evidence>
<evidence type="ECO:0007829" key="22">
    <source>
        <dbReference type="PDB" id="2ED9"/>
    </source>
</evidence>
<evidence type="ECO:0007829" key="23">
    <source>
        <dbReference type="PDB" id="2EDB"/>
    </source>
</evidence>
<evidence type="ECO:0007829" key="24">
    <source>
        <dbReference type="PDB" id="2EDD"/>
    </source>
</evidence>
<evidence type="ECO:0007829" key="25">
    <source>
        <dbReference type="PDB" id="3AU4"/>
    </source>
</evidence>
<evidence type="ECO:0007829" key="26">
    <source>
        <dbReference type="PDB" id="5X83"/>
    </source>
</evidence>
<proteinExistence type="evidence at protein level"/>
<sequence length="1447" mass="158457">MENSLRCVWVPKLAFVLFGASLFSAHLQVTGFQIKAFTALRFLSEPSDAVTMRGGNVLLDCSAESDRGVPVIKWKKDGIHLALGMDERKQQLSNGSLLIQNILHSRHHKPDEGLYQCEASLGDSGSIISRTAKVAVAGPLRFLSQTESVTAFMGDTVLLKCEVIGEPMPTIHWQKNQQDLTPIPGDSRVVVLPSGALQISRLQPGDIGIYRCSARNPASSRTGNEAEVRILSDPGLHRQLYFLQRPSNVVAIEGKDAVLECCVSGYPPPSFTWLRGEEVIQLRSKKYSLLGGSNLLISNVTDDDSGMYTCVVTYKNENISASAELTVLVPPWFLNHPSNLYAYESMDIEFECTVSGKPVPTVNWMKNGDVVIPSDYFQIVGGSNLRILGVVKSDEGFYQCVAENEAGNAQTSAQLIVPKPAIPSSSVLPSAPRDVVPVLVSSRFVRLSWRPPAEAKGNIQTFTVFFSREGDNRERALNTTQPGSLQLTVGNLKPEAMYTFRVVAYNEWGPGESSQPIKVATQPELQVPGPVENLQAVSTSPTSILITWEPPAYANGPVQGYRLFCTEVSTGKEQNIEVDGLSYKLEGLKKFTEYSLRFLAYNRYGPGVSTDDITVVTLSDVPSAPPQNVSLEVVNSRSIKVSWLPPPSGTQNGFITGYKIRHRKTTRRGEMETLEPNNLWYLFTGLEKGSQYSFQVSAMTVNGTGPPSNWYTAETPENDLDESQVPDQPSSLHVRPQTNCIIMSWTPPLNPNIVVRGYIIGYGVGSPYAETVRVDSKQRYYSIERLESSSHYVISLKAFNNAGEGVPLYESATTRSITDPTDPVDYYPLLDDFPTSVPDLSTPMLPPVGVQAVALTHDAVRVSWADNSVPKNQKTSEVRLYTVRWRTSFSASAKYKSEDTTSLSYTATGLKPNTMYEFSVMVTKNRRSSTWSMTAHATTYEAAPTSAPKDLTVITREGKPRAVIVSWQPPLEANGKITAYILFYTLDKNIPIDDWIMETISGDRLTHQIMDLNLDTMYYFRIQARNSKGVGPLSDPILFRTLKVEHPDKMANDQGRHGDGGYWPVDTNLIDRSTLNEPPIGQMHPPHGSVTPQKNSNLLVIIVVTVGVITVLVVVIVAVICTRRSSAQQRKKRATHSAGKRKGSQKDLRPPDLWIHHEEMEMKNIEKPSGTDPAGRDSPIQSCQDLTPVSHSQSETQLGSKSTSHSGQDTEEAGSSMSTLERSLAARRAPRAKLMIPMDAQSNNPAVVSAIPVPTLESAQYPGILPSPTCGYPHPQFTLRPVPFPTLSVDRGFGAGRSQSVSEGPTTQQPPMLPPSQPEHSSSEEAPSRTIPTACVRPTHPLRSFANPLLPPPMSAIEPKVPYTPLLSQPGPTLPKTHVKTASLGLAGKARSPLLPVSVPTAPEVSEESHKPTEDSANVYEQDDLSEQMASLEGLMKQLNAITGSAF</sequence>
<dbReference type="EMBL" id="X76132">
    <property type="protein sequence ID" value="CAA53735.1"/>
    <property type="molecule type" value="mRNA"/>
</dbReference>
<dbReference type="EMBL" id="AC011155">
    <property type="status" value="NOT_ANNOTATED_CDS"/>
    <property type="molecule type" value="Genomic_DNA"/>
</dbReference>
<dbReference type="EMBL" id="AC016383">
    <property type="status" value="NOT_ANNOTATED_CDS"/>
    <property type="molecule type" value="Genomic_DNA"/>
</dbReference>
<dbReference type="EMBL" id="AC019239">
    <property type="status" value="NOT_ANNOTATED_CDS"/>
    <property type="molecule type" value="Genomic_DNA"/>
</dbReference>
<dbReference type="EMBL" id="AC021486">
    <property type="status" value="NOT_ANNOTATED_CDS"/>
    <property type="molecule type" value="Genomic_DNA"/>
</dbReference>
<dbReference type="EMBL" id="AC027248">
    <property type="status" value="NOT_ANNOTATED_CDS"/>
    <property type="molecule type" value="Genomic_DNA"/>
</dbReference>
<dbReference type="EMBL" id="AC078999">
    <property type="status" value="NOT_ANNOTATED_CDS"/>
    <property type="molecule type" value="Genomic_DNA"/>
</dbReference>
<dbReference type="EMBL" id="AC090660">
    <property type="status" value="NOT_ANNOTATED_CDS"/>
    <property type="molecule type" value="Genomic_DNA"/>
</dbReference>
<dbReference type="EMBL" id="AC100777">
    <property type="status" value="NOT_ANNOTATED_CDS"/>
    <property type="molecule type" value="Genomic_DNA"/>
</dbReference>
<dbReference type="EMBL" id="AC103949">
    <property type="status" value="NOT_ANNOTATED_CDS"/>
    <property type="molecule type" value="Genomic_DNA"/>
</dbReference>
<dbReference type="EMBL" id="AC110591">
    <property type="status" value="NOT_ANNOTATED_CDS"/>
    <property type="molecule type" value="Genomic_DNA"/>
</dbReference>
<dbReference type="EMBL" id="AC116002">
    <property type="status" value="NOT_ANNOTATED_CDS"/>
    <property type="molecule type" value="Genomic_DNA"/>
</dbReference>
<dbReference type="EMBL" id="M32292">
    <property type="protein sequence ID" value="AAA35751.1"/>
    <property type="molecule type" value="mRNA"/>
</dbReference>
<dbReference type="EMBL" id="M32286">
    <property type="protein sequence ID" value="AAA52174.1"/>
    <property type="molecule type" value="Genomic_DNA"/>
</dbReference>
<dbReference type="EMBL" id="M32288">
    <property type="protein sequence ID" value="AAA52175.1"/>
    <property type="status" value="ALT_SEQ"/>
    <property type="molecule type" value="Genomic_DNA"/>
</dbReference>
<dbReference type="EMBL" id="M32290">
    <property type="protein sequence ID" value="AAA52176.1"/>
    <property type="molecule type" value="Genomic_DNA"/>
</dbReference>
<dbReference type="EMBL" id="M63696">
    <property type="protein sequence ID" value="AAA52177.1"/>
    <property type="status" value="ALT_INIT"/>
    <property type="molecule type" value="Genomic_DNA"/>
</dbReference>
<dbReference type="EMBL" id="M63700">
    <property type="protein sequence ID" value="AAA52178.1"/>
    <property type="molecule type" value="Genomic_DNA"/>
</dbReference>
<dbReference type="EMBL" id="M63702">
    <property type="protein sequence ID" value="AAA52179.1"/>
    <property type="status" value="ALT_INIT"/>
    <property type="molecule type" value="Genomic_DNA"/>
</dbReference>
<dbReference type="EMBL" id="M63718">
    <property type="protein sequence ID" value="AAA52180.1"/>
    <property type="status" value="ALT_INIT"/>
    <property type="molecule type" value="Genomic_DNA"/>
</dbReference>
<dbReference type="EMBL" id="M63698">
    <property type="protein sequence ID" value="AAA52181.1"/>
    <property type="molecule type" value="Genomic_DNA"/>
</dbReference>
<dbReference type="CCDS" id="CCDS11952.1"/>
<dbReference type="PIR" id="A54100">
    <property type="entry name" value="A54100"/>
</dbReference>
<dbReference type="RefSeq" id="NP_005206.2">
    <property type="nucleotide sequence ID" value="NM_005215.4"/>
</dbReference>
<dbReference type="PDB" id="2ED7">
    <property type="method" value="NMR"/>
    <property type="chains" value="A=419-524"/>
</dbReference>
<dbReference type="PDB" id="2ED8">
    <property type="method" value="NMR"/>
    <property type="chains" value="A=528-620"/>
</dbReference>
<dbReference type="PDB" id="2ED9">
    <property type="method" value="NMR"/>
    <property type="chains" value="A=602-718"/>
</dbReference>
<dbReference type="PDB" id="2EDB">
    <property type="method" value="NMR"/>
    <property type="chains" value="A=716-818"/>
</dbReference>
<dbReference type="PDB" id="2EDD">
    <property type="method" value="NMR"/>
    <property type="chains" value="A=833-942"/>
</dbReference>
<dbReference type="PDB" id="2EDE">
    <property type="method" value="NMR"/>
    <property type="chains" value="A=944-1044"/>
</dbReference>
<dbReference type="PDB" id="3AU4">
    <property type="method" value="X-ray"/>
    <property type="resolution" value="1.90 A"/>
    <property type="chains" value="B=1390-1447"/>
</dbReference>
<dbReference type="PDB" id="4URT">
    <property type="method" value="X-ray"/>
    <property type="resolution" value="3.10 A"/>
    <property type="chains" value="B=844-1043"/>
</dbReference>
<dbReference type="PDB" id="5X83">
    <property type="method" value="X-ray"/>
    <property type="resolution" value="3.00 A"/>
    <property type="chains" value="A/C=721-815, B/D=844-1043"/>
</dbReference>
<dbReference type="PDBsum" id="2ED7"/>
<dbReference type="PDBsum" id="2ED8"/>
<dbReference type="PDBsum" id="2ED9"/>
<dbReference type="PDBsum" id="2EDB"/>
<dbReference type="PDBsum" id="2EDD"/>
<dbReference type="PDBsum" id="2EDE"/>
<dbReference type="PDBsum" id="3AU4"/>
<dbReference type="PDBsum" id="4URT"/>
<dbReference type="PDBsum" id="5X83"/>
<dbReference type="BMRB" id="P43146"/>
<dbReference type="SMR" id="P43146"/>
<dbReference type="BioGRID" id="107998">
    <property type="interactions" value="70"/>
</dbReference>
<dbReference type="CORUM" id="P43146"/>
<dbReference type="DIP" id="DIP-38423N"/>
<dbReference type="ELM" id="P43146"/>
<dbReference type="FunCoup" id="P43146">
    <property type="interactions" value="553"/>
</dbReference>
<dbReference type="IntAct" id="P43146">
    <property type="interactions" value="52"/>
</dbReference>
<dbReference type="MINT" id="P43146"/>
<dbReference type="STRING" id="9606.ENSP00000389140"/>
<dbReference type="GlyCosmos" id="P43146">
    <property type="glycosylation" value="6 sites, No reported glycans"/>
</dbReference>
<dbReference type="GlyGen" id="P43146">
    <property type="glycosylation" value="11 sites, 1 N-linked glycan (1 site), 1 O-linked glycan (1 site)"/>
</dbReference>
<dbReference type="iPTMnet" id="P43146"/>
<dbReference type="PhosphoSitePlus" id="P43146"/>
<dbReference type="SwissPalm" id="P43146"/>
<dbReference type="BioMuta" id="DCC"/>
<dbReference type="DMDM" id="296434474"/>
<dbReference type="jPOST" id="P43146"/>
<dbReference type="MassIVE" id="P43146"/>
<dbReference type="PaxDb" id="9606-ENSP00000389140"/>
<dbReference type="PeptideAtlas" id="P43146"/>
<dbReference type="ProteomicsDB" id="55591"/>
<dbReference type="Antibodypedia" id="3710">
    <property type="antibodies" value="308 antibodies from 39 providers"/>
</dbReference>
<dbReference type="DNASU" id="1630"/>
<dbReference type="Ensembl" id="ENST00000442544.7">
    <property type="protein sequence ID" value="ENSP00000389140.2"/>
    <property type="gene ID" value="ENSG00000187323.13"/>
</dbReference>
<dbReference type="GeneID" id="1630"/>
<dbReference type="KEGG" id="hsa:1630"/>
<dbReference type="MANE-Select" id="ENST00000442544.7">
    <property type="protein sequence ID" value="ENSP00000389140.2"/>
    <property type="RefSeq nucleotide sequence ID" value="NM_005215.4"/>
    <property type="RefSeq protein sequence ID" value="NP_005206.2"/>
</dbReference>
<dbReference type="UCSC" id="uc002lfe.3">
    <property type="organism name" value="human"/>
</dbReference>
<dbReference type="AGR" id="HGNC:2701"/>
<dbReference type="CTD" id="1630"/>
<dbReference type="DisGeNET" id="1630"/>
<dbReference type="GeneCards" id="DCC"/>
<dbReference type="GeneReviews" id="DCC"/>
<dbReference type="HGNC" id="HGNC:2701">
    <property type="gene designation" value="DCC"/>
</dbReference>
<dbReference type="HPA" id="ENSG00000187323">
    <property type="expression patterns" value="Tissue enhanced (brain, testis)"/>
</dbReference>
<dbReference type="MalaCards" id="DCC"/>
<dbReference type="MIM" id="120470">
    <property type="type" value="gene"/>
</dbReference>
<dbReference type="MIM" id="157600">
    <property type="type" value="phenotype"/>
</dbReference>
<dbReference type="MIM" id="617542">
    <property type="type" value="phenotype"/>
</dbReference>
<dbReference type="neXtProt" id="NX_P43146"/>
<dbReference type="OpenTargets" id="ENSG00000187323"/>
<dbReference type="Orphanet" id="238722">
    <property type="disease" value="Familial congenital mirror movements"/>
</dbReference>
<dbReference type="Orphanet" id="2744">
    <property type="disease" value="Horizontal gaze palsy with progressive scoliosis"/>
</dbReference>
<dbReference type="Orphanet" id="478">
    <property type="disease" value="Kallmann syndrome"/>
</dbReference>
<dbReference type="PharmGKB" id="PA27170"/>
<dbReference type="VEuPathDB" id="HostDB:ENSG00000187323"/>
<dbReference type="eggNOG" id="KOG4221">
    <property type="taxonomic scope" value="Eukaryota"/>
</dbReference>
<dbReference type="GeneTree" id="ENSGT00940000158867"/>
<dbReference type="InParanoid" id="P43146"/>
<dbReference type="OMA" id="GGDHAYW"/>
<dbReference type="OrthoDB" id="114660at2759"/>
<dbReference type="PAN-GO" id="P43146">
    <property type="GO annotations" value="6 GO annotations based on evolutionary models"/>
</dbReference>
<dbReference type="PhylomeDB" id="P43146"/>
<dbReference type="TreeFam" id="TF321506"/>
<dbReference type="PathwayCommons" id="P43146"/>
<dbReference type="Reactome" id="R-HSA-373752">
    <property type="pathway name" value="Netrin-1 signaling"/>
</dbReference>
<dbReference type="Reactome" id="R-HSA-376172">
    <property type="pathway name" value="DSCAM interactions"/>
</dbReference>
<dbReference type="Reactome" id="R-HSA-418885">
    <property type="pathway name" value="DCC mediated attractive signaling"/>
</dbReference>
<dbReference type="Reactome" id="R-HSA-418886">
    <property type="pathway name" value="Netrin mediated repulsion signals"/>
</dbReference>
<dbReference type="Reactome" id="R-HSA-418889">
    <property type="pathway name" value="Caspase activation via Dependence Receptors in the absence of ligand"/>
</dbReference>
<dbReference type="Reactome" id="R-HSA-418890">
    <property type="pathway name" value="Role of second messengers in netrin-1 signaling"/>
</dbReference>
<dbReference type="Reactome" id="R-HSA-428542">
    <property type="pathway name" value="Regulation of commissural axon pathfinding by SLIT and ROBO"/>
</dbReference>
<dbReference type="SignaLink" id="P43146"/>
<dbReference type="SIGNOR" id="P43146"/>
<dbReference type="BioGRID-ORCS" id="1630">
    <property type="hits" value="12 hits in 1146 CRISPR screens"/>
</dbReference>
<dbReference type="ChiTaRS" id="DCC">
    <property type="organism name" value="human"/>
</dbReference>
<dbReference type="EvolutionaryTrace" id="P43146"/>
<dbReference type="GeneWiki" id="Deleted_in_Colorectal_Cancer"/>
<dbReference type="GenomeRNAi" id="1630"/>
<dbReference type="Pharos" id="P43146">
    <property type="development level" value="Tbio"/>
</dbReference>
<dbReference type="PRO" id="PR:P43146"/>
<dbReference type="Proteomes" id="UP000005640">
    <property type="component" value="Chromosome 18"/>
</dbReference>
<dbReference type="RNAct" id="P43146">
    <property type="molecule type" value="protein"/>
</dbReference>
<dbReference type="Bgee" id="ENSG00000187323">
    <property type="expression patterns" value="Expressed in cortical plate and 108 other cell types or tissues"/>
</dbReference>
<dbReference type="ExpressionAtlas" id="P43146">
    <property type="expression patterns" value="baseline and differential"/>
</dbReference>
<dbReference type="GO" id="GO:0030424">
    <property type="term" value="C:axon"/>
    <property type="evidence" value="ECO:0007669"/>
    <property type="project" value="Ensembl"/>
</dbReference>
<dbReference type="GO" id="GO:0009986">
    <property type="term" value="C:cell surface"/>
    <property type="evidence" value="ECO:0000318"/>
    <property type="project" value="GO_Central"/>
</dbReference>
<dbReference type="GO" id="GO:0005829">
    <property type="term" value="C:cytosol"/>
    <property type="evidence" value="ECO:0000304"/>
    <property type="project" value="Reactome"/>
</dbReference>
<dbReference type="GO" id="GO:0005886">
    <property type="term" value="C:plasma membrane"/>
    <property type="evidence" value="ECO:0000318"/>
    <property type="project" value="GO_Central"/>
</dbReference>
<dbReference type="GO" id="GO:0098839">
    <property type="term" value="C:postsynaptic density membrane"/>
    <property type="evidence" value="ECO:0007669"/>
    <property type="project" value="Ensembl"/>
</dbReference>
<dbReference type="GO" id="GO:0098685">
    <property type="term" value="C:Schaffer collateral - CA1 synapse"/>
    <property type="evidence" value="ECO:0007669"/>
    <property type="project" value="Ensembl"/>
</dbReference>
<dbReference type="GO" id="GO:0004888">
    <property type="term" value="F:transmembrane signaling receptor activity"/>
    <property type="evidence" value="ECO:0000304"/>
    <property type="project" value="ProtInc"/>
</dbReference>
<dbReference type="GO" id="GO:0033564">
    <property type="term" value="P:anterior/posterior axon guidance"/>
    <property type="evidence" value="ECO:0007669"/>
    <property type="project" value="Ensembl"/>
</dbReference>
<dbReference type="GO" id="GO:0006915">
    <property type="term" value="P:apoptotic process"/>
    <property type="evidence" value="ECO:0000304"/>
    <property type="project" value="ProtInc"/>
</dbReference>
<dbReference type="GO" id="GO:0007411">
    <property type="term" value="P:axon guidance"/>
    <property type="evidence" value="ECO:0000318"/>
    <property type="project" value="GO_Central"/>
</dbReference>
<dbReference type="GO" id="GO:0007409">
    <property type="term" value="P:axonogenesis"/>
    <property type="evidence" value="ECO:0000304"/>
    <property type="project" value="ProtInc"/>
</dbReference>
<dbReference type="GO" id="GO:0098609">
    <property type="term" value="P:cell-cell adhesion"/>
    <property type="evidence" value="ECO:0000318"/>
    <property type="project" value="GO_Central"/>
</dbReference>
<dbReference type="GO" id="GO:0033563">
    <property type="term" value="P:dorsal/ventral axon guidance"/>
    <property type="evidence" value="ECO:0007669"/>
    <property type="project" value="Ensembl"/>
</dbReference>
<dbReference type="GO" id="GO:0048671">
    <property type="term" value="P:negative regulation of collateral sprouting"/>
    <property type="evidence" value="ECO:0000304"/>
    <property type="project" value="BHF-UCL"/>
</dbReference>
<dbReference type="GO" id="GO:2000171">
    <property type="term" value="P:negative regulation of dendrite development"/>
    <property type="evidence" value="ECO:0000304"/>
    <property type="project" value="BHF-UCL"/>
</dbReference>
<dbReference type="GO" id="GO:0010977">
    <property type="term" value="P:negative regulation of neuron projection development"/>
    <property type="evidence" value="ECO:0000304"/>
    <property type="project" value="BHF-UCL"/>
</dbReference>
<dbReference type="GO" id="GO:0001764">
    <property type="term" value="P:neuron migration"/>
    <property type="evidence" value="ECO:0000318"/>
    <property type="project" value="GO_Central"/>
</dbReference>
<dbReference type="GO" id="GO:0099170">
    <property type="term" value="P:postsynaptic modulation of chemical synaptic transmission"/>
    <property type="evidence" value="ECO:0007669"/>
    <property type="project" value="Ensembl"/>
</dbReference>
<dbReference type="GO" id="GO:0021965">
    <property type="term" value="P:spinal cord ventral commissure morphogenesis"/>
    <property type="evidence" value="ECO:0007669"/>
    <property type="project" value="Ensembl"/>
</dbReference>
<dbReference type="CDD" id="cd00063">
    <property type="entry name" value="FN3"/>
    <property type="match status" value="6"/>
</dbReference>
<dbReference type="CDD" id="cd00096">
    <property type="entry name" value="Ig"/>
    <property type="match status" value="1"/>
</dbReference>
<dbReference type="CDD" id="cd05722">
    <property type="entry name" value="IgI_1_Neogenin_like"/>
    <property type="match status" value="1"/>
</dbReference>
<dbReference type="FunFam" id="2.60.40.10:FF:003668">
    <property type="match status" value="1"/>
</dbReference>
<dbReference type="FunFam" id="2.60.40.10:FF:000004">
    <property type="entry name" value="DCC isoform 1"/>
    <property type="match status" value="3"/>
</dbReference>
<dbReference type="FunFam" id="2.60.40.10:FF:000101">
    <property type="entry name" value="Neogenin isoform 1"/>
    <property type="match status" value="1"/>
</dbReference>
<dbReference type="FunFam" id="2.60.40.10:FF:000106">
    <property type="entry name" value="Neogenin isoform 1"/>
    <property type="match status" value="1"/>
</dbReference>
<dbReference type="FunFam" id="2.60.40.10:FF:000133">
    <property type="entry name" value="Neogenin isoform 1"/>
    <property type="match status" value="1"/>
</dbReference>
<dbReference type="FunFam" id="2.60.40.10:FF:000189">
    <property type="entry name" value="Neogenin isoform 3"/>
    <property type="match status" value="1"/>
</dbReference>
<dbReference type="FunFam" id="2.60.40.10:FF:000216">
    <property type="entry name" value="neogenin isoform X1"/>
    <property type="match status" value="1"/>
</dbReference>
<dbReference type="FunFam" id="2.60.40.10:FF:000187">
    <property type="entry name" value="neogenin isoform X2"/>
    <property type="match status" value="1"/>
</dbReference>
<dbReference type="Gene3D" id="2.60.40.10">
    <property type="entry name" value="Immunoglobulins"/>
    <property type="match status" value="10"/>
</dbReference>
<dbReference type="InterPro" id="IPR003961">
    <property type="entry name" value="FN3_dom"/>
</dbReference>
<dbReference type="InterPro" id="IPR036116">
    <property type="entry name" value="FN3_sf"/>
</dbReference>
<dbReference type="InterPro" id="IPR007110">
    <property type="entry name" value="Ig-like_dom"/>
</dbReference>
<dbReference type="InterPro" id="IPR036179">
    <property type="entry name" value="Ig-like_dom_sf"/>
</dbReference>
<dbReference type="InterPro" id="IPR013783">
    <property type="entry name" value="Ig-like_fold"/>
</dbReference>
<dbReference type="InterPro" id="IPR013098">
    <property type="entry name" value="Ig_I-set"/>
</dbReference>
<dbReference type="InterPro" id="IPR003599">
    <property type="entry name" value="Ig_sub"/>
</dbReference>
<dbReference type="InterPro" id="IPR003598">
    <property type="entry name" value="Ig_sub2"/>
</dbReference>
<dbReference type="InterPro" id="IPR010560">
    <property type="entry name" value="Neogenin_C"/>
</dbReference>
<dbReference type="PANTHER" id="PTHR44170:SF8">
    <property type="entry name" value="NETRIN RECEPTOR DCC"/>
    <property type="match status" value="1"/>
</dbReference>
<dbReference type="PANTHER" id="PTHR44170">
    <property type="entry name" value="PROTEIN SIDEKICK"/>
    <property type="match status" value="1"/>
</dbReference>
<dbReference type="Pfam" id="PF00041">
    <property type="entry name" value="fn3"/>
    <property type="match status" value="6"/>
</dbReference>
<dbReference type="Pfam" id="PF07679">
    <property type="entry name" value="I-set"/>
    <property type="match status" value="3"/>
</dbReference>
<dbReference type="Pfam" id="PF06583">
    <property type="entry name" value="Neogenin_C"/>
    <property type="match status" value="1"/>
</dbReference>
<dbReference type="PRINTS" id="PR00014">
    <property type="entry name" value="FNTYPEIII"/>
</dbReference>
<dbReference type="SMART" id="SM00060">
    <property type="entry name" value="FN3"/>
    <property type="match status" value="6"/>
</dbReference>
<dbReference type="SMART" id="SM00409">
    <property type="entry name" value="IG"/>
    <property type="match status" value="5"/>
</dbReference>
<dbReference type="SMART" id="SM00408">
    <property type="entry name" value="IGc2"/>
    <property type="match status" value="4"/>
</dbReference>
<dbReference type="SUPFAM" id="SSF49265">
    <property type="entry name" value="Fibronectin type III"/>
    <property type="match status" value="4"/>
</dbReference>
<dbReference type="SUPFAM" id="SSF48726">
    <property type="entry name" value="Immunoglobulin"/>
    <property type="match status" value="4"/>
</dbReference>
<dbReference type="PROSITE" id="PS50853">
    <property type="entry name" value="FN3"/>
    <property type="match status" value="6"/>
</dbReference>
<dbReference type="PROSITE" id="PS50835">
    <property type="entry name" value="IG_LIKE"/>
    <property type="match status" value="4"/>
</dbReference>
<gene>
    <name type="primary">DCC</name>
    <name type="synonym">IGDCC1</name>
</gene>
<feature type="signal peptide" evidence="3">
    <location>
        <begin position="1"/>
        <end position="25"/>
    </location>
</feature>
<feature type="chain" id="PRO_0000014744" description="Netrin receptor DCC">
    <location>
        <begin position="26"/>
        <end position="1447"/>
    </location>
</feature>
<feature type="topological domain" description="Extracellular" evidence="3">
    <location>
        <begin position="26"/>
        <end position="1097"/>
    </location>
</feature>
<feature type="transmembrane region" description="Helical" evidence="3">
    <location>
        <begin position="1098"/>
        <end position="1122"/>
    </location>
</feature>
<feature type="topological domain" description="Cytoplasmic" evidence="3">
    <location>
        <begin position="1123"/>
        <end position="1447"/>
    </location>
</feature>
<feature type="domain" description="Ig-like C2-type 1">
    <location>
        <begin position="26"/>
        <end position="135"/>
    </location>
</feature>
<feature type="domain" description="Ig-like C2-type 2">
    <location>
        <begin position="139"/>
        <end position="229"/>
    </location>
</feature>
<feature type="domain" description="Ig-like C2-type 3">
    <location>
        <begin position="234"/>
        <end position="326"/>
    </location>
</feature>
<feature type="domain" description="Ig-like C2-type 4">
    <location>
        <begin position="331"/>
        <end position="416"/>
    </location>
</feature>
<feature type="domain" description="Fibronectin type-III 1" evidence="5">
    <location>
        <begin position="431"/>
        <end position="524"/>
    </location>
</feature>
<feature type="domain" description="Fibronectin type-III 2" evidence="5">
    <location>
        <begin position="530"/>
        <end position="620"/>
    </location>
</feature>
<feature type="domain" description="Fibronectin type-III 3" evidence="5">
    <location>
        <begin position="625"/>
        <end position="718"/>
    </location>
</feature>
<feature type="domain" description="Fibronectin type-III 4" evidence="5">
    <location>
        <begin position="728"/>
        <end position="821"/>
    </location>
</feature>
<feature type="domain" description="Fibronectin type-III 5" evidence="5">
    <location>
        <begin position="846"/>
        <end position="942"/>
    </location>
</feature>
<feature type="domain" description="Fibronectin type-III 6" evidence="5">
    <location>
        <begin position="947"/>
        <end position="1044"/>
    </location>
</feature>
<feature type="region of interest" description="Disordered" evidence="6">
    <location>
        <begin position="1126"/>
        <end position="1152"/>
    </location>
</feature>
<feature type="region of interest" description="Disordered" evidence="6">
    <location>
        <begin position="1165"/>
        <end position="1222"/>
    </location>
</feature>
<feature type="region of interest" description="Disordered" evidence="6">
    <location>
        <begin position="1288"/>
        <end position="1330"/>
    </location>
</feature>
<feature type="region of interest" description="Disordered" evidence="6">
    <location>
        <begin position="1394"/>
        <end position="1419"/>
    </location>
</feature>
<feature type="region of interest" description="Interaction with MYO10" evidence="9">
    <location>
        <begin position="1432"/>
        <end position="1439"/>
    </location>
</feature>
<feature type="compositionally biased region" description="Basic residues" evidence="6">
    <location>
        <begin position="1129"/>
        <end position="1143"/>
    </location>
</feature>
<feature type="compositionally biased region" description="Polar residues" evidence="6">
    <location>
        <begin position="1179"/>
        <end position="1221"/>
    </location>
</feature>
<feature type="compositionally biased region" description="Polar residues" evidence="6">
    <location>
        <begin position="1297"/>
        <end position="1310"/>
    </location>
</feature>
<feature type="modified residue" description="Phosphoserine; by MAPK1" evidence="2">
    <location>
        <position position="1178"/>
    </location>
</feature>
<feature type="modified residue" description="Phosphothreonine; by MAPK1" evidence="2">
    <location>
        <position position="1187"/>
    </location>
</feature>
<feature type="modified residue" description="Phosphoserine; by MAPK1" evidence="2">
    <location>
        <position position="1267"/>
    </location>
</feature>
<feature type="glycosylation site" description="N-linked (GlcNAc...) asparagine" evidence="3">
    <location>
        <position position="94"/>
    </location>
</feature>
<feature type="glycosylation site" description="N-linked (GlcNAc...) asparagine" evidence="3">
    <location>
        <position position="299"/>
    </location>
</feature>
<feature type="glycosylation site" description="N-linked (GlcNAc...) asparagine" evidence="3">
    <location>
        <position position="318"/>
    </location>
</feature>
<feature type="glycosylation site" description="N-linked (GlcNAc...) asparagine" evidence="3">
    <location>
        <position position="478"/>
    </location>
</feature>
<feature type="glycosylation site" description="N-linked (GlcNAc...) asparagine" evidence="3">
    <location>
        <position position="628"/>
    </location>
</feature>
<feature type="glycosylation site" description="N-linked (GlcNAc...) asparagine" evidence="3">
    <location>
        <position position="702"/>
    </location>
</feature>
<feature type="disulfide bond" evidence="4">
    <location>
        <begin position="61"/>
        <end position="117"/>
    </location>
</feature>
<feature type="disulfide bond" evidence="4">
    <location>
        <begin position="161"/>
        <end position="212"/>
    </location>
</feature>
<feature type="disulfide bond" evidence="4">
    <location>
        <begin position="261"/>
        <end position="310"/>
    </location>
</feature>
<feature type="disulfide bond" evidence="4">
    <location>
        <begin position="352"/>
        <end position="400"/>
    </location>
</feature>
<feature type="sequence variant" id="VAR_060257" description="In dbSNP:rs9951523." evidence="10 14">
    <original>F</original>
    <variation>L</variation>
    <location>
        <position position="23"/>
    </location>
</feature>
<feature type="sequence variant" id="VAR_089744" description="No effect on interaction with NTN1; dbSNP:rs372910352." evidence="13">
    <original>I</original>
    <variation>T</variation>
    <location>
        <position position="164"/>
    </location>
</feature>
<feature type="sequence variant" id="VAR_003909" description="In a esophageal carcinoma; dbSNP:rs121912967." evidence="15">
    <original>M</original>
    <variation>T</variation>
    <location>
        <position position="168"/>
    </location>
</feature>
<feature type="sequence variant" id="VAR_089745" description="In MRMV1; uncertain significance; no effect on interaction with NTN1; dbSNP:rs138724679." evidence="13">
    <original>N</original>
    <variation>S</variation>
    <location>
        <position position="176"/>
    </location>
</feature>
<feature type="sequence variant" id="VAR_003910" description="In dbSNP:rs2229080." evidence="15">
    <original>R</original>
    <variation>G</variation>
    <location>
        <position position="201"/>
    </location>
</feature>
<feature type="sequence variant" id="VAR_079145" description="In MRMV1; likely pathogenic." evidence="11 13">
    <location>
        <begin position="275"/>
        <end position="1447"/>
    </location>
</feature>
<feature type="sequence variant" id="VAR_089746" description="In MRMV1; likely pathogenic." evidence="13">
    <location>
        <begin position="475"/>
        <end position="1447"/>
    </location>
</feature>
<feature type="sequence variant" id="VAR_079146" description="In MRMV1; uncertain significance; dbSNP:rs1057519056." evidence="11">
    <original>R</original>
    <variation>P</variation>
    <location>
        <position position="597"/>
    </location>
</feature>
<feature type="sequence variant" id="VAR_060258" description="In dbSNP:rs2271042.">
    <original>L</original>
    <variation>R</variation>
    <location>
        <position position="679"/>
    </location>
</feature>
<feature type="sequence variant" id="VAR_079287" description="In HGPPS2; uncertain significance; dbSNP:rs1555652216." evidence="12">
    <original>Q</original>
    <variation>K</variation>
    <location>
        <position position="691"/>
    </location>
</feature>
<feature type="sequence variant" id="VAR_079147" description="In MRMV1; uncertain significance; dbSNP:rs199651452." evidence="11">
    <original>M</original>
    <variation>L</variation>
    <location>
        <position position="743"/>
    </location>
</feature>
<feature type="sequence variant" id="VAR_079148" description="In MRMV1; uncertain significance; dbSNP:rs775565634." evidence="11">
    <original>V</original>
    <variation>M</variation>
    <location>
        <position position="754"/>
    </location>
</feature>
<feature type="sequence variant" id="VAR_056043" description="In dbSNP:rs2278339.">
    <original>I</original>
    <variation>M</variation>
    <location>
        <position position="759"/>
    </location>
</feature>
<feature type="sequence variant" id="VAR_079149" description="In MRMV1; dbSNP:rs1057519054." evidence="11">
    <original>V</original>
    <variation>G</variation>
    <location>
        <position position="793"/>
    </location>
</feature>
<feature type="sequence variant" id="VAR_079150" description="In MRMV1; dbSNP:rs1057519055." evidence="11">
    <original>G</original>
    <variation>E</variation>
    <location>
        <position position="805"/>
    </location>
</feature>
<feature type="sequence variant" id="VAR_079151" description="In MRMV1; uncertain significance; dbSNP:rs1057519057." evidence="11">
    <original>A</original>
    <variation>T</variation>
    <location>
        <position position="893"/>
    </location>
</feature>
<feature type="sequence variant" id="VAR_024495" description="In dbSNP:rs984274.">
    <original>M</original>
    <variation>V</variation>
    <location>
        <position position="1017"/>
    </location>
</feature>
<feature type="sequence variant" id="VAR_089747" description="In MRMV1; likely pathogenic." evidence="13">
    <location>
        <begin position="1021"/>
        <end position="1447"/>
    </location>
</feature>
<feature type="sequence variant" id="VAR_089748" description="In MRMV1; likely pathogenic." evidence="13">
    <location>
        <begin position="1025"/>
        <end position="1447"/>
    </location>
</feature>
<feature type="sequence variant" id="VAR_035511" description="In a colorectal cancer sample; somatic mutation." evidence="7">
    <original>F</original>
    <variation>S</variation>
    <location>
        <position position="1039"/>
    </location>
</feature>
<feature type="sequence variant" id="VAR_060259" description="In dbSNP:rs2270950.">
    <original>H</original>
    <variation>L</variation>
    <location>
        <position position="1191"/>
    </location>
</feature>
<feature type="sequence variant" id="VAR_079152" description="In MRMV1; uncertain significance; dbSNP:rs1057519058." evidence="11">
    <original>M</original>
    <variation>V</variation>
    <location>
        <position position="1217"/>
    </location>
</feature>
<feature type="sequence variant" id="VAR_089749" description="In MRMV1; uncertain significance; dbSNP:rs1284447482." evidence="13">
    <original>M</original>
    <variation>L</variation>
    <location>
        <position position="1235"/>
    </location>
</feature>
<feature type="sequence variant" id="VAR_079153" description="In MRMV1; uncertain significance; dbSNP:rs748112308." evidence="11">
    <original>A</original>
    <variation>T</variation>
    <location>
        <position position="1250"/>
    </location>
</feature>
<feature type="sequence variant" id="VAR_089750" description="In MRMV1; likely pathogenic." evidence="13">
    <location>
        <begin position="1337"/>
        <end position="1447"/>
    </location>
</feature>
<feature type="sequence variant" id="VAR_089751" description="In MRMV1; uncertain significance; no effect on interaction with NTN1; dbSNP:rs149118168." evidence="13">
    <original>R</original>
    <variation>H</variation>
    <location>
        <position position="1343"/>
    </location>
</feature>
<feature type="sequence variant" id="VAR_003911" description="In a colorectal carcinoma; dbSNP:rs387906555." evidence="16">
    <original>P</original>
    <variation>H</variation>
    <location>
        <position position="1375"/>
    </location>
</feature>
<feature type="mutagenesis site" description="Abolishes interaction with MYO10." evidence="9">
    <original>L</original>
    <variation>S</variation>
    <location>
        <position position="1432"/>
    </location>
</feature>
<feature type="mutagenesis site" description="Abolishes interaction with MYO10." evidence="9">
    <original>LM</original>
    <variation>SS</variation>
    <location>
        <begin position="1435"/>
        <end position="1436"/>
    </location>
</feature>
<feature type="mutagenesis site" description="Abolishes interaction with MYO10." evidence="9">
    <original>L</original>
    <variation>S</variation>
    <location>
        <position position="1439"/>
    </location>
</feature>
<feature type="sequence conflict" description="In Ref. 1; CAA53735." evidence="19" ref="1">
    <original>L</original>
    <variation>F</variation>
    <location>
        <position position="951"/>
    </location>
</feature>
<feature type="strand" evidence="20">
    <location>
        <begin position="425"/>
        <end position="428"/>
    </location>
</feature>
<feature type="strand" evidence="20">
    <location>
        <begin position="436"/>
        <end position="440"/>
    </location>
</feature>
<feature type="strand" evidence="20">
    <location>
        <begin position="445"/>
        <end position="448"/>
    </location>
</feature>
<feature type="strand" evidence="20">
    <location>
        <begin position="459"/>
        <end position="470"/>
    </location>
</feature>
<feature type="strand" evidence="20">
    <location>
        <begin position="475"/>
        <end position="478"/>
    </location>
</feature>
<feature type="strand" evidence="20">
    <location>
        <begin position="486"/>
        <end position="489"/>
    </location>
</feature>
<feature type="strand" evidence="20">
    <location>
        <begin position="494"/>
        <end position="500"/>
    </location>
</feature>
<feature type="strand" evidence="20">
    <location>
        <begin position="503"/>
        <end position="508"/>
    </location>
</feature>
<feature type="strand" evidence="20">
    <location>
        <begin position="517"/>
        <end position="520"/>
    </location>
</feature>
<feature type="strand" evidence="21">
    <location>
        <begin position="532"/>
        <end position="537"/>
    </location>
</feature>
<feature type="strand" evidence="21">
    <location>
        <begin position="543"/>
        <end position="549"/>
    </location>
</feature>
<feature type="strand" evidence="21">
    <location>
        <begin position="560"/>
        <end position="567"/>
    </location>
</feature>
<feature type="turn" evidence="21">
    <location>
        <begin position="568"/>
        <end position="570"/>
    </location>
</feature>
<feature type="strand" evidence="21">
    <location>
        <begin position="573"/>
        <end position="578"/>
    </location>
</feature>
<feature type="strand" evidence="21">
    <location>
        <begin position="583"/>
        <end position="587"/>
    </location>
</feature>
<feature type="strand" evidence="21">
    <location>
        <begin position="593"/>
        <end position="601"/>
    </location>
</feature>
<feature type="strand" evidence="21">
    <location>
        <begin position="606"/>
        <end position="609"/>
    </location>
</feature>
<feature type="strand" evidence="21">
    <location>
        <begin position="613"/>
        <end position="616"/>
    </location>
</feature>
<feature type="strand" evidence="22">
    <location>
        <begin position="631"/>
        <end position="635"/>
    </location>
</feature>
<feature type="strand" evidence="22">
    <location>
        <begin position="638"/>
        <end position="642"/>
    </location>
</feature>
<feature type="turn" evidence="22">
    <location>
        <begin position="648"/>
        <end position="650"/>
    </location>
</feature>
<feature type="strand" evidence="22">
    <location>
        <begin position="657"/>
        <end position="668"/>
    </location>
</feature>
<feature type="strand" evidence="22">
    <location>
        <begin position="671"/>
        <end position="674"/>
    </location>
</feature>
<feature type="strand" evidence="22">
    <location>
        <begin position="679"/>
        <end position="684"/>
    </location>
</feature>
<feature type="strand" evidence="22">
    <location>
        <begin position="691"/>
        <end position="694"/>
    </location>
</feature>
<feature type="strand" evidence="22">
    <location>
        <begin position="696"/>
        <end position="699"/>
    </location>
</feature>
<feature type="strand" evidence="22">
    <location>
        <begin position="711"/>
        <end position="714"/>
    </location>
</feature>
<feature type="strand" evidence="23">
    <location>
        <begin position="716"/>
        <end position="719"/>
    </location>
</feature>
<feature type="strand" evidence="26">
    <location>
        <begin position="730"/>
        <end position="736"/>
    </location>
</feature>
<feature type="strand" evidence="26">
    <location>
        <begin position="741"/>
        <end position="746"/>
    </location>
</feature>
<feature type="strand" evidence="26">
    <location>
        <begin position="751"/>
        <end position="753"/>
    </location>
</feature>
<feature type="strand" evidence="26">
    <location>
        <begin position="757"/>
        <end position="765"/>
    </location>
</feature>
<feature type="strand" evidence="26">
    <location>
        <begin position="769"/>
        <end position="775"/>
    </location>
</feature>
<feature type="strand" evidence="26">
    <location>
        <begin position="780"/>
        <end position="783"/>
    </location>
</feature>
<feature type="strand" evidence="26">
    <location>
        <begin position="791"/>
        <end position="800"/>
    </location>
</feature>
<feature type="strand" evidence="26">
    <location>
        <begin position="808"/>
        <end position="813"/>
    </location>
</feature>
<feature type="strand" evidence="26">
    <location>
        <begin position="848"/>
        <end position="854"/>
    </location>
</feature>
<feature type="strand" evidence="26">
    <location>
        <begin position="856"/>
        <end position="858"/>
    </location>
</feature>
<feature type="strand" evidence="26">
    <location>
        <begin position="860"/>
        <end position="865"/>
    </location>
</feature>
<feature type="strand" evidence="24">
    <location>
        <begin position="867"/>
        <end position="869"/>
    </location>
</feature>
<feature type="strand" evidence="26">
    <location>
        <begin position="880"/>
        <end position="891"/>
    </location>
</feature>
<feature type="strand" evidence="26">
    <location>
        <begin position="896"/>
        <end position="907"/>
    </location>
</feature>
<feature type="strand" evidence="26">
    <location>
        <begin position="915"/>
        <end position="924"/>
    </location>
</feature>
<feature type="strand" evidence="26">
    <location>
        <begin position="927"/>
        <end position="929"/>
    </location>
</feature>
<feature type="strand" evidence="26">
    <location>
        <begin position="935"/>
        <end position="938"/>
    </location>
</feature>
<feature type="strand" evidence="26">
    <location>
        <begin position="949"/>
        <end position="955"/>
    </location>
</feature>
<feature type="strand" evidence="26">
    <location>
        <begin position="963"/>
        <end position="968"/>
    </location>
</feature>
<feature type="strand" evidence="26">
    <location>
        <begin position="977"/>
        <end position="986"/>
    </location>
</feature>
<feature type="strand" evidence="26">
    <location>
        <begin position="988"/>
        <end position="990"/>
    </location>
</feature>
<feature type="helix" evidence="26">
    <location>
        <begin position="992"/>
        <end position="994"/>
    </location>
</feature>
<feature type="strand" evidence="26">
    <location>
        <begin position="995"/>
        <end position="1001"/>
    </location>
</feature>
<feature type="strand" evidence="26">
    <location>
        <begin position="1006"/>
        <end position="1009"/>
    </location>
</feature>
<feature type="strand" evidence="26">
    <location>
        <begin position="1017"/>
        <end position="1026"/>
    </location>
</feature>
<feature type="strand" evidence="26">
    <location>
        <begin position="1037"/>
        <end position="1040"/>
    </location>
</feature>
<feature type="helix" evidence="25">
    <location>
        <begin position="1415"/>
        <end position="1421"/>
    </location>
</feature>
<feature type="helix" evidence="25">
    <location>
        <begin position="1425"/>
        <end position="1443"/>
    </location>
</feature>
<reference key="1">
    <citation type="journal article" date="1994" name="Genes Dev.">
        <title>The DCC gene product in cellular differentiation and colorectal tumorigenesis.</title>
        <authorList>
            <person name="Hedrick L."/>
            <person name="Cho K.R."/>
            <person name="Fearon E.R."/>
            <person name="Wu T.-C."/>
            <person name="Kinzler K.W."/>
            <person name="Vogelstein B."/>
        </authorList>
    </citation>
    <scope>NUCLEOTIDE SEQUENCE [MRNA]</scope>
    <scope>TISSUE SPECIFICITY</scope>
    <scope>VARIANT LEU-23</scope>
</reference>
<reference key="2">
    <citation type="journal article" date="2005" name="Nature">
        <title>DNA sequence and analysis of human chromosome 18.</title>
        <authorList>
            <person name="Nusbaum C."/>
            <person name="Zody M.C."/>
            <person name="Borowsky M.L."/>
            <person name="Kamal M."/>
            <person name="Kodira C.D."/>
            <person name="Taylor T.D."/>
            <person name="Whittaker C.A."/>
            <person name="Chang J.L."/>
            <person name="Cuomo C.A."/>
            <person name="Dewar K."/>
            <person name="FitzGerald M.G."/>
            <person name="Yang X."/>
            <person name="Abouelleil A."/>
            <person name="Allen N.R."/>
            <person name="Anderson S."/>
            <person name="Bloom T."/>
            <person name="Bugalter B."/>
            <person name="Butler J."/>
            <person name="Cook A."/>
            <person name="DeCaprio D."/>
            <person name="Engels R."/>
            <person name="Garber M."/>
            <person name="Gnirke A."/>
            <person name="Hafez N."/>
            <person name="Hall J.L."/>
            <person name="Norman C.H."/>
            <person name="Itoh T."/>
            <person name="Jaffe D.B."/>
            <person name="Kuroki Y."/>
            <person name="Lehoczky J."/>
            <person name="Lui A."/>
            <person name="Macdonald P."/>
            <person name="Mauceli E."/>
            <person name="Mikkelsen T.S."/>
            <person name="Naylor J.W."/>
            <person name="Nicol R."/>
            <person name="Nguyen C."/>
            <person name="Noguchi H."/>
            <person name="O'Leary S.B."/>
            <person name="Piqani B."/>
            <person name="Smith C.L."/>
            <person name="Talamas J.A."/>
            <person name="Topham K."/>
            <person name="Totoki Y."/>
            <person name="Toyoda A."/>
            <person name="Wain H.M."/>
            <person name="Young S.K."/>
            <person name="Zeng Q."/>
            <person name="Zimmer A.R."/>
            <person name="Fujiyama A."/>
            <person name="Hattori M."/>
            <person name="Birren B.W."/>
            <person name="Sakaki Y."/>
            <person name="Lander E.S."/>
        </authorList>
    </citation>
    <scope>NUCLEOTIDE SEQUENCE [LARGE SCALE GENOMIC DNA]</scope>
</reference>
<reference key="3">
    <citation type="journal article" date="1990" name="Science">
        <title>Identification of a chromosome 18q gene that is altered in colorectal cancers.</title>
        <authorList>
            <person name="Fearon E.R."/>
            <person name="Cho K.R."/>
            <person name="Nigro J.M."/>
            <person name="Kern S.E."/>
            <person name="Simons J.W."/>
            <person name="Ruppert J.M."/>
            <person name="Hamilton S.R."/>
            <person name="Preisinger A.C."/>
            <person name="Thomas G."/>
            <person name="Kinzler K.W."/>
            <person name="Vogelstein B."/>
        </authorList>
    </citation>
    <scope>NUCLEOTIDE SEQUENCE [GENOMIC DNA / MRNA] OF 1-750</scope>
    <scope>VARIANT LEU-23</scope>
</reference>
<reference key="4">
    <citation type="journal article" date="1991" name="Cell">
        <title>Scrambled exons.</title>
        <authorList>
            <person name="Nigro J.M."/>
            <person name="Cho K.R."/>
            <person name="Fearon E.R."/>
            <person name="Kern S.E."/>
            <person name="Ruppert J.M."/>
            <person name="Oliner J.D."/>
            <person name="Kinzler K.W."/>
            <person name="Vogelstein B."/>
        </authorList>
    </citation>
    <scope>NUCLEOTIDE SEQUENCE [GENOMIC DNA] OF 107-472</scope>
</reference>
<reference key="5">
    <citation type="journal article" date="1994" name="Genomics">
        <title>The DCC gene: structural analysis and mutations in colorectal carcinomas.</title>
        <authorList>
            <person name="Cho K.R."/>
            <person name="Oliner J.D."/>
            <person name="Simons J.W."/>
            <person name="Hedrick L."/>
            <person name="Fearon E.R."/>
            <person name="Preisinger A.C."/>
            <person name="Hedge P."/>
            <person name="Silverman G.A."/>
            <person name="Vogelstein B."/>
        </authorList>
    </citation>
    <scope>GENE STRUCTURE</scope>
    <scope>VARIANT HIS-1375</scope>
</reference>
<reference key="6">
    <citation type="journal article" date="1996" name="Cell">
        <title>Deleted in colorectal cancer (DCC) encodes a netrin receptor.</title>
        <authorList>
            <person name="Keino-Masu K."/>
            <person name="Masu M."/>
            <person name="Hinck L."/>
            <person name="Leonardo E.D."/>
            <person name="Chan S.S.-Y."/>
            <person name="Culotti J.G."/>
            <person name="Tessier-Lavigne M."/>
        </authorList>
    </citation>
    <scope>FUNCTION</scope>
</reference>
<reference key="7">
    <citation type="journal article" date="1997" name="Genes Dev.">
        <title>Mammalian homologs of seven in absentia regulate DCC via the ubiquitin-proteasome pathway.</title>
        <authorList>
            <person name="Hu G."/>
            <person name="Zhang S."/>
            <person name="Vidal M."/>
            <person name="Baer J.L."/>
            <person name="Xu T."/>
            <person name="Fearon E.R."/>
        </authorList>
    </citation>
    <scope>INTERACTION WITH SIAH1 AND SIAH2</scope>
    <scope>UBIQUITINATION</scope>
    <scope>PROTEASOMAL DEGRADATION</scope>
</reference>
<reference key="8">
    <citation type="journal article" date="2010" name="Science">
        <title>Mutations in DCC cause congenital mirror movements.</title>
        <authorList>
            <person name="Srour M."/>
            <person name="Riviere J.B."/>
            <person name="Pham J.M."/>
            <person name="Dube M.P."/>
            <person name="Girard S."/>
            <person name="Morin S."/>
            <person name="Dion P.A."/>
            <person name="Asselin G."/>
            <person name="Rochefort D."/>
            <person name="Hince P."/>
            <person name="Diab S."/>
            <person name="Sharafaddinzadeh N."/>
            <person name="Chouinard S."/>
            <person name="Theoret H."/>
            <person name="Charron F."/>
            <person name="Rouleau G.A."/>
        </authorList>
    </citation>
    <scope>INVOLVEMENT IN MRMV1</scope>
</reference>
<reference key="9">
    <citation type="journal article" date="2017" name="Nat. Genet.">
        <title>Mutations in DCC cause isolated agenesis of the corpus callosum with incomplete penetrance.</title>
        <authorList>
            <person name="Marsh A.P."/>
            <person name="Heron D."/>
            <person name="Edwards T.J."/>
            <person name="Quartier A."/>
            <person name="Galea C."/>
            <person name="Nava C."/>
            <person name="Rastetter A."/>
            <person name="Moutard M.L."/>
            <person name="Anderson V."/>
            <person name="Bitoun P."/>
            <person name="Bunt J."/>
            <person name="Faudet A."/>
            <person name="Garel C."/>
            <person name="Gillies G."/>
            <person name="Gobius I."/>
            <person name="Guegan J."/>
            <person name="Heide S."/>
            <person name="Keren B."/>
            <person name="Lesne F."/>
            <person name="Lukic V."/>
            <person name="Mandelstam S.A."/>
            <person name="McGillivray G."/>
            <person name="McIlroy A."/>
            <person name="Meneret A."/>
            <person name="Mignot C."/>
            <person name="Morcom L.R."/>
            <person name="Odent S."/>
            <person name="Paolino A."/>
            <person name="Pope K."/>
            <person name="Riant F."/>
            <person name="Robinson G.A."/>
            <person name="Spencer-Smith M."/>
            <person name="Srour M."/>
            <person name="Stephenson S.E."/>
            <person name="Tankard R."/>
            <person name="Trouillard O."/>
            <person name="Welniarz Q."/>
            <person name="Wood A."/>
            <person name="Brice A."/>
            <person name="Rouleau G."/>
            <person name="Attie-Bitach T."/>
            <person name="Delatycki M.B."/>
            <person name="Mandel J.L."/>
            <person name="Amor D.J."/>
            <person name="Roze E."/>
            <person name="Piton A."/>
            <person name="Bahlo M."/>
            <person name="Billette de Villemeur T."/>
            <person name="Sherr E.H."/>
            <person name="Leventer R.J."/>
            <person name="Richards L.J."/>
            <person name="Lockhart P.J."/>
            <person name="Depienne C."/>
        </authorList>
    </citation>
    <scope>INVOLVEMENT IN MRMV1</scope>
    <scope>VARIANTS MRMV1 275-ARG--PHE-1447 DEL; PRO-597; LEU-743; MET-754; GLY-793; GLU-805; THR-893; VAL-1217 AND THR-1250</scope>
</reference>
<reference key="10">
    <citation type="submission" date="2008-03" db="PDB data bank">
        <title>Solution structure of the fibronectin type III domains of human netrin receptor DCC.</title>
        <authorList>
            <consortium name="RIKEN structural genomics initiative (RSGI)"/>
        </authorList>
    </citation>
    <scope>STRUCTURE BY NMR OF 419-1047</scope>
</reference>
<reference key="11">
    <citation type="journal article" date="2011" name="EMBO J.">
        <title>Structural basis of cargo recognition by the myosin-X MyTH4-FERM domain.</title>
        <authorList>
            <person name="Hirano Y."/>
            <person name="Hatano T."/>
            <person name="Takahashi A."/>
            <person name="Toriyama M."/>
            <person name="Inagaki N."/>
            <person name="Hakoshima T."/>
        </authorList>
    </citation>
    <scope>X-RAY CRYSTALLOGRAPHY (1.9 ANGSTROMS) OF 1390-1447 IN COMPLEX WITH MYO10</scope>
    <scope>INTERACTION WITH MYO10</scope>
    <scope>MUTAGENESIS OF LEU-1432; 1435-LEU-MET-1436 AND LEU-1439</scope>
</reference>
<reference key="12">
    <citation type="journal article" date="1994" name="Cancer Res.">
        <title>Point mutations and allelic deletion of tumor suppressor gene DCC in human esophageal squamous cell carcinomas and their relation to metastasis.</title>
        <authorList>
            <person name="Miyake S."/>
            <person name="Nagai K."/>
            <person name="Yoshino K."/>
            <person name="Oto M."/>
            <person name="Endo M."/>
            <person name="Yuasa Y."/>
        </authorList>
    </citation>
    <scope>VARIANTS THR-168 AND GLY-201</scope>
    <scope>ROLE IN METASTATIC TUMOR DISSEMINATION</scope>
</reference>
<reference key="13">
    <citation type="journal article" date="2006" name="Science">
        <title>The consensus coding sequences of human breast and colorectal cancers.</title>
        <authorList>
            <person name="Sjoeblom T."/>
            <person name="Jones S."/>
            <person name="Wood L.D."/>
            <person name="Parsons D.W."/>
            <person name="Lin J."/>
            <person name="Barber T.D."/>
            <person name="Mandelker D."/>
            <person name="Leary R.J."/>
            <person name="Ptak J."/>
            <person name="Silliman N."/>
            <person name="Szabo S."/>
            <person name="Buckhaults P."/>
            <person name="Farrell C."/>
            <person name="Meeh P."/>
            <person name="Markowitz S.D."/>
            <person name="Willis J."/>
            <person name="Dawson D."/>
            <person name="Willson J.K.V."/>
            <person name="Gazdar A.F."/>
            <person name="Hartigan J."/>
            <person name="Wu L."/>
            <person name="Liu C."/>
            <person name="Parmigiani G."/>
            <person name="Park B.H."/>
            <person name="Bachman K.E."/>
            <person name="Papadopoulos N."/>
            <person name="Vogelstein B."/>
            <person name="Kinzler K.W."/>
            <person name="Velculescu V.E."/>
        </authorList>
    </citation>
    <scope>VARIANT [LARGE SCALE ANALYSIS] SER-1039</scope>
</reference>
<reference key="14">
    <citation type="journal article" date="2017" name="Nat. Genet.">
        <title>Biallelic mutations in human DCC cause developmental split-brain syndrome.</title>
        <authorList>
            <person name="Jamuar S.S."/>
            <person name="Schmitz-Abe K."/>
            <person name="D'Gama A.M."/>
            <person name="Drottar M."/>
            <person name="Chan W.M."/>
            <person name="Peeva M."/>
            <person name="Servattalab S."/>
            <person name="Lam A.N."/>
            <person name="Delgado M.R."/>
            <person name="Clegg N.J."/>
            <person name="Zayed Z.A."/>
            <person name="Dogar M.A."/>
            <person name="Alorainy I.A."/>
            <person name="Jamea A.A."/>
            <person name="Abu-Amero K."/>
            <person name="Griebel M."/>
            <person name="Ward W."/>
            <person name="Lein E.S."/>
            <person name="Markianos K."/>
            <person name="Barkovich A.J."/>
            <person name="Robson C.D."/>
            <person name="Grant P.E."/>
            <person name="Bosley T.M."/>
            <person name="Engle E.C."/>
            <person name="Walsh C.A."/>
            <person name="Yu T.W."/>
        </authorList>
    </citation>
    <scope>VARIANT HGPPS2 LYS-691</scope>
    <scope>INVOLVEMENT IN HGPPS2</scope>
</reference>
<reference key="15">
    <citation type="journal article" date="2024" name="Mov. Disord.">
        <title>Defining the genetic landscape of congenital mirror movements in 80 affected individuals.</title>
        <authorList>
            <person name="Collins Hutchinson M.L."/>
            <person name="St-Onge J."/>
            <person name="Schlienger S."/>
            <person name="Boudrahem-Addour N."/>
            <person name="Mougharbel L."/>
            <person name="Michaud J.F."/>
            <person name="Lloyd C."/>
            <person name="Bruneau E."/>
            <person name="Roux C."/>
            <person name="Sahly A.N."/>
            <person name="Osterman B."/>
            <person name="Myers K.A."/>
            <person name="Rouleau G.A."/>
            <person name="Jimenez Cruz D.A."/>
            <person name="Riviere J.B."/>
            <person name="Accogli A."/>
            <person name="Charron F."/>
            <person name="Srour M."/>
        </authorList>
    </citation>
    <scope>VARIANT THR-164</scope>
    <scope>CHARACTERIZATION OF VARIANT THR-164</scope>
    <scope>VARIANTS MRMV1 SER-176; 275-ARG--PHE-1447 DEL; 475-ARG--PHE-1447 DEL; 1021-ARG--PHE-1447 DEL; 1025-ARG--PHE-1447 DEL; LEU-1235; 1337-ARG--PHE-1447 DEL AND HIS-1343</scope>
    <scope>CHARACTERIZATION OF VARIANTS MRMV1 SER-176 AND HIS-1343</scope>
    <scope>INTERACTION WITH NTN1</scope>
</reference>
<keyword id="KW-0002">3D-structure</keyword>
<keyword id="KW-0053">Apoptosis</keyword>
<keyword id="KW-0217">Developmental protein</keyword>
<keyword id="KW-0225">Disease variant</keyword>
<keyword id="KW-1015">Disulfide bond</keyword>
<keyword id="KW-0325">Glycoprotein</keyword>
<keyword id="KW-0393">Immunoglobulin domain</keyword>
<keyword id="KW-0991">Intellectual disability</keyword>
<keyword id="KW-0472">Membrane</keyword>
<keyword id="KW-0597">Phosphoprotein</keyword>
<keyword id="KW-1267">Proteomics identification</keyword>
<keyword id="KW-0675">Receptor</keyword>
<keyword id="KW-1185">Reference proteome</keyword>
<keyword id="KW-0677">Repeat</keyword>
<keyword id="KW-0732">Signal</keyword>
<keyword id="KW-0812">Transmembrane</keyword>
<keyword id="KW-1133">Transmembrane helix</keyword>
<keyword id="KW-0043">Tumor suppressor</keyword>
<keyword id="KW-0832">Ubl conjugation</keyword>
<protein>
    <recommendedName>
        <fullName>Netrin receptor DCC</fullName>
    </recommendedName>
    <alternativeName>
        <fullName>Colorectal cancer suppressor</fullName>
    </alternativeName>
    <alternativeName>
        <fullName>Immunoglobulin superfamily DCC subclass member 1</fullName>
    </alternativeName>
    <alternativeName>
        <fullName>Tumor suppressor protein DCC</fullName>
    </alternativeName>
</protein>
<comment type="function">
    <text evidence="15 17">Receptor for netrin required for axon guidance. Mediates axon attraction of neuronal growth cones in the developing nervous system upon ligand binding. Its association with UNC5 proteins may trigger signaling for axon repulsion. It also acts as a dependence receptor required for apoptosis induction when not associated with netrin ligand. Implicated as a tumor suppressor gene.</text>
</comment>
<comment type="subunit">
    <text evidence="1 2 9 13 18">Interacts with the cytoplasmic part of UNC5A, UNC5B, UNC5C and probably UNC5D (By similarity). Interacts with DSCAM (By similarity). Interacts with PTK2/FAK1 and MAPK1 (By similarity). Interacts with NTN1(PubMed:38314870). Interacts with MYO10 (PubMed:21642953). Interacts with CBLN4; this interaction can be competed by NTN1 (By similarity). Interacts with SIAH1 and SIAH2 (PubMed:9334332).</text>
</comment>
<comment type="interaction">
    <interactant intactId="EBI-1222919">
        <id>P43146</id>
    </interactant>
    <interactant intactId="EBI-516799">
        <id>P55211</id>
        <label>CASP9</label>
    </interactant>
    <organismsDiffer>false</organismsDiffer>
    <experiments>2</experiments>
</comment>
<comment type="interaction">
    <interactant intactId="EBI-1222919">
        <id>P43146</id>
    </interactant>
    <interactant intactId="EBI-1809742">
        <id>P56270</id>
        <label>MAZ</label>
    </interactant>
    <organismsDiffer>false</organismsDiffer>
    <experiments>4</experiments>
</comment>
<comment type="interaction">
    <interactant intactId="EBI-1222919">
        <id>P43146</id>
    </interactant>
    <interactant intactId="EBI-307061">
        <id>Q9HD67</id>
        <label>MYO10</label>
    </interactant>
    <organismsDiffer>false</organismsDiffer>
    <experiments>7</experiments>
</comment>
<comment type="interaction">
    <interactant intactId="EBI-1222919">
        <id>P43146</id>
    </interactant>
    <interactant intactId="EBI-2678626">
        <id>O95631</id>
        <label>NTN1</label>
    </interactant>
    <organismsDiffer>false</organismsDiffer>
    <experiments>4</experiments>
</comment>
<comment type="interaction">
    <interactant intactId="EBI-1222919">
        <id>P43146</id>
    </interactant>
    <interactant intactId="EBI-366357">
        <id>P46779</id>
        <label>RPL28</label>
    </interactant>
    <organismsDiffer>false</organismsDiffer>
    <experiments>3</experiments>
</comment>
<comment type="interaction">
    <interactant intactId="EBI-1222919">
        <id>P43146</id>
    </interactant>
    <interactant intactId="EBI-358018">
        <id>P46777</id>
        <label>RPL5</label>
    </interactant>
    <organismsDiffer>false</organismsDiffer>
    <experiments>7</experiments>
</comment>
<comment type="interaction">
    <interactant intactId="EBI-1222919">
        <id>P43146</id>
    </interactant>
    <interactant intactId="EBI-353072">
        <id>P62266</id>
        <label>RPS23</label>
    </interactant>
    <organismsDiffer>false</organismsDiffer>
    <experiments>2</experiments>
</comment>
<comment type="subcellular location">
    <subcellularLocation>
        <location>Membrane</location>
        <topology>Single-pass type I membrane protein</topology>
    </subcellularLocation>
</comment>
<comment type="tissue specificity">
    <text evidence="14">Found in axons of the central and peripheral nervous system and in differentiated cell types of the intestine. Not expressed in colorectal tumor cells that lost their capacity to differentiate into mucus producing cells.</text>
</comment>
<comment type="PTM">
    <text evidence="18">Ubiquitinated; mediated by SIAH1 or SIAH2 and leading to its subsequent proteasomal degradation.</text>
</comment>
<comment type="disease" evidence="8 11 13">
    <disease id="DI-02833">
        <name>Mirror movements 1</name>
        <acronym>MRMV1</acronym>
        <description>A disorder characterized by contralateral involuntary movements that mirror voluntary ones. While mirror movements are occasionally found in young children, persistence beyond the age of 10 is abnormal. Mirror movements occur more commonly in the upper extremities. Some MRMV1 patients have agenesis of the corpus callosum.</description>
        <dbReference type="MIM" id="157600"/>
    </disease>
    <text>The disease is caused by variants affecting the gene represented in this entry.</text>
</comment>
<comment type="disease" evidence="12">
    <disease id="DI-05031">
        <name>Gaze palsy, familial horizontal, with progressive scoliosis, 2, with impaired intellectual development</name>
        <acronym>HGPPS2</acronym>
        <description>An autosomal recessive neurologic disorder characterized by global developmental delay, delayed walking, intellectual disability, horizontal gaze palsy, and childhood-onset progressive scoliosis.</description>
        <dbReference type="MIM" id="617542"/>
    </disease>
    <text>The disease is caused by variants affecting the gene represented in this entry.</text>
</comment>
<comment type="miscellaneous">
    <text>Inactivation of DCC due to allelic deletion and/or point mutations is related to lymphatic and hematogenous metastatic tumor dissemination.</text>
</comment>
<comment type="similarity">
    <text evidence="19">Belongs to the immunoglobulin superfamily. DCC family.</text>
</comment>
<comment type="sequence caution" evidence="19">
    <conflict type="erroneous gene model prediction">
        <sequence resource="EMBL-CDS" id="AAA52175"/>
    </conflict>
</comment>
<comment type="sequence caution" evidence="19">
    <conflict type="erroneous initiation">
        <sequence resource="EMBL-CDS" id="AAA52177"/>
    </conflict>
    <text>Truncated N-terminus.</text>
</comment>
<comment type="sequence caution" evidence="19">
    <conflict type="erroneous initiation">
        <sequence resource="EMBL-CDS" id="AAA52179"/>
    </conflict>
    <text>Truncated N-terminus.</text>
</comment>
<comment type="sequence caution" evidence="19">
    <conflict type="erroneous initiation">
        <sequence resource="EMBL-CDS" id="AAA52180"/>
    </conflict>
    <text>Truncated N-terminus.</text>
</comment>
<comment type="online information" name="Atlas of Genetics and Cytogenetics in Oncology and Haematology">
    <link uri="https://atlasgeneticsoncology.org/gene/331/DCC"/>
</comment>
<name>DCC_HUMAN</name>
<accession>P43146</accession>